<comment type="function">
    <text evidence="1">Calcium-dependent mitochondrial solute carrier. Mitochondrial solute carriers shuttle metabolites, nucleotides, and cofactors through the mitochondrial inner membrane (By similarity).</text>
</comment>
<comment type="subcellular location">
    <subcellularLocation>
        <location evidence="1">Mitochondrion inner membrane</location>
        <topology evidence="1">Multi-pass membrane protein</topology>
    </subcellularLocation>
</comment>
<comment type="induction">
    <text evidence="4">Down-regulated by phagocytic stimuli.</text>
</comment>
<comment type="similarity">
    <text evidence="5">Belongs to the mitochondrial carrier (TC 2.A.29) family.</text>
</comment>
<reference key="1">
    <citation type="journal article" date="2005" name="Nature">
        <title>The genome of the social amoeba Dictyostelium discoideum.</title>
        <authorList>
            <person name="Eichinger L."/>
            <person name="Pachebat J.A."/>
            <person name="Gloeckner G."/>
            <person name="Rajandream M.A."/>
            <person name="Sucgang R."/>
            <person name="Berriman M."/>
            <person name="Song J."/>
            <person name="Olsen R."/>
            <person name="Szafranski K."/>
            <person name="Xu Q."/>
            <person name="Tunggal B."/>
            <person name="Kummerfeld S."/>
            <person name="Madera M."/>
            <person name="Konfortov B.A."/>
            <person name="Rivero F."/>
            <person name="Bankier A.T."/>
            <person name="Lehmann R."/>
            <person name="Hamlin N."/>
            <person name="Davies R."/>
            <person name="Gaudet P."/>
            <person name="Fey P."/>
            <person name="Pilcher K."/>
            <person name="Chen G."/>
            <person name="Saunders D."/>
            <person name="Sodergren E.J."/>
            <person name="Davis P."/>
            <person name="Kerhornou A."/>
            <person name="Nie X."/>
            <person name="Hall N."/>
            <person name="Anjard C."/>
            <person name="Hemphill L."/>
            <person name="Bason N."/>
            <person name="Farbrother P."/>
            <person name="Desany B."/>
            <person name="Just E."/>
            <person name="Morio T."/>
            <person name="Rost R."/>
            <person name="Churcher C.M."/>
            <person name="Cooper J."/>
            <person name="Haydock S."/>
            <person name="van Driessche N."/>
            <person name="Cronin A."/>
            <person name="Goodhead I."/>
            <person name="Muzny D.M."/>
            <person name="Mourier T."/>
            <person name="Pain A."/>
            <person name="Lu M."/>
            <person name="Harper D."/>
            <person name="Lindsay R."/>
            <person name="Hauser H."/>
            <person name="James K.D."/>
            <person name="Quiles M."/>
            <person name="Madan Babu M."/>
            <person name="Saito T."/>
            <person name="Buchrieser C."/>
            <person name="Wardroper A."/>
            <person name="Felder M."/>
            <person name="Thangavelu M."/>
            <person name="Johnson D."/>
            <person name="Knights A."/>
            <person name="Loulseged H."/>
            <person name="Mungall K.L."/>
            <person name="Oliver K."/>
            <person name="Price C."/>
            <person name="Quail M.A."/>
            <person name="Urushihara H."/>
            <person name="Hernandez J."/>
            <person name="Rabbinowitsch E."/>
            <person name="Steffen D."/>
            <person name="Sanders M."/>
            <person name="Ma J."/>
            <person name="Kohara Y."/>
            <person name="Sharp S."/>
            <person name="Simmonds M.N."/>
            <person name="Spiegler S."/>
            <person name="Tivey A."/>
            <person name="Sugano S."/>
            <person name="White B."/>
            <person name="Walker D."/>
            <person name="Woodward J.R."/>
            <person name="Winckler T."/>
            <person name="Tanaka Y."/>
            <person name="Shaulsky G."/>
            <person name="Schleicher M."/>
            <person name="Weinstock G.M."/>
            <person name="Rosenthal A."/>
            <person name="Cox E.C."/>
            <person name="Chisholm R.L."/>
            <person name="Gibbs R.A."/>
            <person name="Loomis W.F."/>
            <person name="Platzer M."/>
            <person name="Kay R.R."/>
            <person name="Williams J.G."/>
            <person name="Dear P.H."/>
            <person name="Noegel A.A."/>
            <person name="Barrell B.G."/>
            <person name="Kuspa A."/>
        </authorList>
    </citation>
    <scope>NUCLEOTIDE SEQUENCE [LARGE SCALE GENOMIC DNA]</scope>
    <source>
        <strain>AX4</strain>
    </source>
</reference>
<reference key="2">
    <citation type="journal article" date="2007" name="Biochimie">
        <title>Mitochondrial carrier family: repertoire and peculiarities of the cellular slime mould Dictyostelium discoideum.</title>
        <authorList>
            <person name="Satre M."/>
            <person name="Mattei S."/>
            <person name="Aubry L."/>
            <person name="Gaudet P."/>
            <person name="Pelosi L."/>
            <person name="Brandolin G."/>
            <person name="Klein G."/>
        </authorList>
    </citation>
    <scope>REVIEW</scope>
</reference>
<reference key="3">
    <citation type="journal article" date="2008" name="BMC Genomics">
        <title>Genome-wide transcriptional changes induced by phagocytosis or growth on bacteria in Dictyostelium.</title>
        <authorList>
            <person name="Sillo A."/>
            <person name="Bloomfield G."/>
            <person name="Balest A."/>
            <person name="Balbo A."/>
            <person name="Pergolizzi B."/>
            <person name="Peracino B."/>
            <person name="Skelton J."/>
            <person name="Ivens A."/>
            <person name="Bozzaro S."/>
        </authorList>
    </citation>
    <scope>INDUCTION [LARGE SCALE ANALYSIS]</scope>
</reference>
<name>MCFC_DICDI</name>
<protein>
    <recommendedName>
        <fullName>Mitochondrial substrate carrier family protein C</fullName>
    </recommendedName>
</protein>
<keyword id="KW-0106">Calcium</keyword>
<keyword id="KW-0472">Membrane</keyword>
<keyword id="KW-0479">Metal-binding</keyword>
<keyword id="KW-0496">Mitochondrion</keyword>
<keyword id="KW-0999">Mitochondrion inner membrane</keyword>
<keyword id="KW-1185">Reference proteome</keyword>
<keyword id="KW-0677">Repeat</keyword>
<keyword id="KW-0812">Transmembrane</keyword>
<keyword id="KW-1133">Transmembrane helix</keyword>
<keyword id="KW-0813">Transport</keyword>
<sequence>MVLNENDKEFVKKLFDSLDKDNNGKLTREEIKEGFFKLRIPSSEKDIESFLTNVDKDKDGSVSFKEFEDFTIENIKKLKIVFEELDTNKSGTLDIHEIEESIKKLNIPLYSEQELIRLFHRIDKNRDNQIDFNEWRELLVLLPNSNLQLIISFWKDSQILDAGFDNGGFIPPMVEKKEKASSLRNTITYMLAGSVAGFASRTSTAPLERVKIMCQLNHGKPISLISAFKACYKDGGIKGFFRGNLANIIKVSPESAVKFGTYEYVKKLFAENDCELTSAQRFISGSVAGVVSHTTLFPLEVVRLRLSAEIAGTYNGIFDCFKKIAISEKSIRPFYRGLGASITATIPHSGVNMMVYEFLKHKVIKMTGNEFPTAGQLLVCASTSSVCGQLVGYPFHVVKSRLITQGSSVNQEKYTGLFDGLTKIIKKEGPIGLYKGIVPSFMKSIPSHSITFIVYEGFKKAFDVNLKEKKHH</sequence>
<proteinExistence type="evidence at transcript level"/>
<dbReference type="EMBL" id="AAFI02000095">
    <property type="protein sequence ID" value="EDR41049.1"/>
    <property type="molecule type" value="Genomic_DNA"/>
</dbReference>
<dbReference type="RefSeq" id="XP_001733022.1">
    <property type="nucleotide sequence ID" value="XM_001732970.1"/>
</dbReference>
<dbReference type="SMR" id="B0G159"/>
<dbReference type="FunCoup" id="B0G159">
    <property type="interactions" value="300"/>
</dbReference>
<dbReference type="STRING" id="44689.B0G159"/>
<dbReference type="PaxDb" id="44689-DDB0237599"/>
<dbReference type="EnsemblProtists" id="EDR41049">
    <property type="protein sequence ID" value="EDR41049"/>
    <property type="gene ID" value="DDB_G0287009"/>
</dbReference>
<dbReference type="GeneID" id="8625905"/>
<dbReference type="KEGG" id="ddi:DDB_G0287009"/>
<dbReference type="dictyBase" id="DDB_G0287009">
    <property type="gene designation" value="mcfC"/>
</dbReference>
<dbReference type="VEuPathDB" id="AmoebaDB:DDB_G0287009"/>
<dbReference type="eggNOG" id="KOG0036">
    <property type="taxonomic scope" value="Eukaryota"/>
</dbReference>
<dbReference type="HOGENOM" id="CLU_015166_2_0_1"/>
<dbReference type="InParanoid" id="B0G159"/>
<dbReference type="OMA" id="SGQWWKQ"/>
<dbReference type="PhylomeDB" id="B0G159"/>
<dbReference type="PRO" id="PR:B0G159"/>
<dbReference type="Proteomes" id="UP000002195">
    <property type="component" value="Chromosome 4"/>
</dbReference>
<dbReference type="GO" id="GO:0005743">
    <property type="term" value="C:mitochondrial inner membrane"/>
    <property type="evidence" value="ECO:0007669"/>
    <property type="project" value="UniProtKB-SubCell"/>
</dbReference>
<dbReference type="GO" id="GO:0005739">
    <property type="term" value="C:mitochondrion"/>
    <property type="evidence" value="ECO:0000250"/>
    <property type="project" value="dictyBase"/>
</dbReference>
<dbReference type="GO" id="GO:0005347">
    <property type="term" value="F:ATP transmembrane transporter activity"/>
    <property type="evidence" value="ECO:0000318"/>
    <property type="project" value="GO_Central"/>
</dbReference>
<dbReference type="GO" id="GO:0005509">
    <property type="term" value="F:calcium ion binding"/>
    <property type="evidence" value="ECO:0007669"/>
    <property type="project" value="InterPro"/>
</dbReference>
<dbReference type="GO" id="GO:0015866">
    <property type="term" value="P:ADP transport"/>
    <property type="evidence" value="ECO:0000318"/>
    <property type="project" value="GO_Central"/>
</dbReference>
<dbReference type="GO" id="GO:0015867">
    <property type="term" value="P:ATP transport"/>
    <property type="evidence" value="ECO:0000318"/>
    <property type="project" value="GO_Central"/>
</dbReference>
<dbReference type="FunFam" id="1.50.40.10:FF:000067">
    <property type="entry name" value="Mitochondrial substrate carrier family protein"/>
    <property type="match status" value="1"/>
</dbReference>
<dbReference type="Gene3D" id="1.10.238.10">
    <property type="entry name" value="EF-hand"/>
    <property type="match status" value="2"/>
</dbReference>
<dbReference type="Gene3D" id="1.50.40.10">
    <property type="entry name" value="Mitochondrial carrier domain"/>
    <property type="match status" value="1"/>
</dbReference>
<dbReference type="InterPro" id="IPR011992">
    <property type="entry name" value="EF-hand-dom_pair"/>
</dbReference>
<dbReference type="InterPro" id="IPR018247">
    <property type="entry name" value="EF_Hand_1_Ca_BS"/>
</dbReference>
<dbReference type="InterPro" id="IPR002048">
    <property type="entry name" value="EF_hand_dom"/>
</dbReference>
<dbReference type="InterPro" id="IPR002067">
    <property type="entry name" value="Mit_carrier"/>
</dbReference>
<dbReference type="InterPro" id="IPR018108">
    <property type="entry name" value="Mitochondrial_sb/sol_carrier"/>
</dbReference>
<dbReference type="InterPro" id="IPR023395">
    <property type="entry name" value="Mt_carrier_dom_sf"/>
</dbReference>
<dbReference type="PANTHER" id="PTHR24089">
    <property type="entry name" value="SOLUTE CARRIER FAMILY 25"/>
    <property type="match status" value="1"/>
</dbReference>
<dbReference type="Pfam" id="PF13499">
    <property type="entry name" value="EF-hand_7"/>
    <property type="match status" value="2"/>
</dbReference>
<dbReference type="Pfam" id="PF00153">
    <property type="entry name" value="Mito_carr"/>
    <property type="match status" value="3"/>
</dbReference>
<dbReference type="PRINTS" id="PR00926">
    <property type="entry name" value="MITOCARRIER"/>
</dbReference>
<dbReference type="SMART" id="SM00054">
    <property type="entry name" value="EFh"/>
    <property type="match status" value="4"/>
</dbReference>
<dbReference type="SUPFAM" id="SSF47473">
    <property type="entry name" value="EF-hand"/>
    <property type="match status" value="1"/>
</dbReference>
<dbReference type="SUPFAM" id="SSF103506">
    <property type="entry name" value="Mitochondrial carrier"/>
    <property type="match status" value="1"/>
</dbReference>
<dbReference type="PROSITE" id="PS00018">
    <property type="entry name" value="EF_HAND_1"/>
    <property type="match status" value="4"/>
</dbReference>
<dbReference type="PROSITE" id="PS50222">
    <property type="entry name" value="EF_HAND_2"/>
    <property type="match status" value="4"/>
</dbReference>
<dbReference type="PROSITE" id="PS50920">
    <property type="entry name" value="SOLCAR"/>
    <property type="match status" value="3"/>
</dbReference>
<accession>B0G159</accession>
<feature type="chain" id="PRO_0000385519" description="Mitochondrial substrate carrier family protein C">
    <location>
        <begin position="1"/>
        <end position="472"/>
    </location>
</feature>
<feature type="topological domain" description="Mitochondrial intermembrane" evidence="1">
    <location>
        <begin position="1"/>
        <end position="189"/>
    </location>
</feature>
<feature type="transmembrane region" description="Helical; Name=1" evidence="2">
    <location>
        <begin position="190"/>
        <end position="207"/>
    </location>
</feature>
<feature type="topological domain" description="Mitochondrial matrix" evidence="1">
    <location>
        <begin position="208"/>
        <end position="242"/>
    </location>
</feature>
<feature type="transmembrane region" description="Helical; Name=2" evidence="2">
    <location>
        <begin position="243"/>
        <end position="263"/>
    </location>
</feature>
<feature type="topological domain" description="Mitochondrial intermembrane" evidence="1">
    <location>
        <begin position="264"/>
        <end position="281"/>
    </location>
</feature>
<feature type="transmembrane region" description="Helical; Name=3" evidence="2">
    <location>
        <begin position="282"/>
        <end position="302"/>
    </location>
</feature>
<feature type="topological domain" description="Mitochondrial matrix" evidence="1">
    <location>
        <begin position="303"/>
        <end position="330"/>
    </location>
</feature>
<feature type="transmembrane region" description="Helical; Name=4" evidence="2">
    <location>
        <begin position="331"/>
        <end position="351"/>
    </location>
</feature>
<feature type="topological domain" description="Mitochondrial intermembrane" evidence="1">
    <location>
        <begin position="352"/>
        <end position="377"/>
    </location>
</feature>
<feature type="transmembrane region" description="Helical; Name=5" evidence="2">
    <location>
        <begin position="378"/>
        <end position="398"/>
    </location>
</feature>
<feature type="topological domain" description="Mitochondrial matrix" evidence="1">
    <location>
        <begin position="399"/>
        <end position="441"/>
    </location>
</feature>
<feature type="transmembrane region" description="Helical; Name=6" evidence="2">
    <location>
        <begin position="442"/>
        <end position="462"/>
    </location>
</feature>
<feature type="topological domain" description="Mitochondrial intermembrane" evidence="1">
    <location>
        <begin position="463"/>
        <end position="472"/>
    </location>
</feature>
<feature type="domain" description="EF-hand 1" evidence="3">
    <location>
        <begin position="6"/>
        <end position="41"/>
    </location>
</feature>
<feature type="domain" description="EF-hand 2" evidence="3">
    <location>
        <begin position="42"/>
        <end position="70"/>
    </location>
</feature>
<feature type="domain" description="EF-hand 3" evidence="3">
    <location>
        <begin position="73"/>
        <end position="108"/>
    </location>
</feature>
<feature type="domain" description="EF-hand 4" evidence="3">
    <location>
        <begin position="110"/>
        <end position="145"/>
    </location>
</feature>
<feature type="repeat" description="Solcar 1">
    <location>
        <begin position="184"/>
        <end position="268"/>
    </location>
</feature>
<feature type="repeat" description="Solcar 2">
    <location>
        <begin position="276"/>
        <end position="362"/>
    </location>
</feature>
<feature type="repeat" description="Solcar 3">
    <location>
        <begin position="375"/>
        <end position="461"/>
    </location>
</feature>
<feature type="binding site" evidence="3">
    <location>
        <position position="19"/>
    </location>
    <ligand>
        <name>Ca(2+)</name>
        <dbReference type="ChEBI" id="CHEBI:29108"/>
        <label>1</label>
    </ligand>
</feature>
<feature type="binding site" evidence="3">
    <location>
        <position position="21"/>
    </location>
    <ligand>
        <name>Ca(2+)</name>
        <dbReference type="ChEBI" id="CHEBI:29108"/>
        <label>1</label>
    </ligand>
</feature>
<feature type="binding site" evidence="3">
    <location>
        <position position="23"/>
    </location>
    <ligand>
        <name>Ca(2+)</name>
        <dbReference type="ChEBI" id="CHEBI:29108"/>
        <label>1</label>
    </ligand>
</feature>
<feature type="binding site" evidence="3">
    <location>
        <position position="25"/>
    </location>
    <ligand>
        <name>Ca(2+)</name>
        <dbReference type="ChEBI" id="CHEBI:29108"/>
        <label>1</label>
    </ligand>
</feature>
<feature type="binding site" evidence="3">
    <location>
        <position position="30"/>
    </location>
    <ligand>
        <name>Ca(2+)</name>
        <dbReference type="ChEBI" id="CHEBI:29108"/>
        <label>1</label>
    </ligand>
</feature>
<feature type="binding site" evidence="3">
    <location>
        <position position="55"/>
    </location>
    <ligand>
        <name>Ca(2+)</name>
        <dbReference type="ChEBI" id="CHEBI:29108"/>
        <label>2</label>
    </ligand>
</feature>
<feature type="binding site" evidence="3">
    <location>
        <position position="57"/>
    </location>
    <ligand>
        <name>Ca(2+)</name>
        <dbReference type="ChEBI" id="CHEBI:29108"/>
        <label>2</label>
    </ligand>
</feature>
<feature type="binding site" evidence="3">
    <location>
        <position position="59"/>
    </location>
    <ligand>
        <name>Ca(2+)</name>
        <dbReference type="ChEBI" id="CHEBI:29108"/>
        <label>2</label>
    </ligand>
</feature>
<feature type="binding site" evidence="3">
    <location>
        <position position="61"/>
    </location>
    <ligand>
        <name>Ca(2+)</name>
        <dbReference type="ChEBI" id="CHEBI:29108"/>
        <label>2</label>
    </ligand>
</feature>
<feature type="binding site" evidence="3">
    <location>
        <position position="66"/>
    </location>
    <ligand>
        <name>Ca(2+)</name>
        <dbReference type="ChEBI" id="CHEBI:29108"/>
        <label>2</label>
    </ligand>
</feature>
<feature type="binding site" evidence="3">
    <location>
        <position position="86"/>
    </location>
    <ligand>
        <name>Ca(2+)</name>
        <dbReference type="ChEBI" id="CHEBI:29108"/>
        <label>3</label>
    </ligand>
</feature>
<feature type="binding site" evidence="3">
    <location>
        <position position="88"/>
    </location>
    <ligand>
        <name>Ca(2+)</name>
        <dbReference type="ChEBI" id="CHEBI:29108"/>
        <label>3</label>
    </ligand>
</feature>
<feature type="binding site" evidence="3">
    <location>
        <position position="90"/>
    </location>
    <ligand>
        <name>Ca(2+)</name>
        <dbReference type="ChEBI" id="CHEBI:29108"/>
        <label>3</label>
    </ligand>
</feature>
<feature type="binding site" evidence="3">
    <location>
        <position position="92"/>
    </location>
    <ligand>
        <name>Ca(2+)</name>
        <dbReference type="ChEBI" id="CHEBI:29108"/>
        <label>3</label>
    </ligand>
</feature>
<feature type="binding site" evidence="3">
    <location>
        <position position="97"/>
    </location>
    <ligand>
        <name>Ca(2+)</name>
        <dbReference type="ChEBI" id="CHEBI:29108"/>
        <label>3</label>
    </ligand>
</feature>
<feature type="binding site" evidence="3">
    <location>
        <position position="123"/>
    </location>
    <ligand>
        <name>Ca(2+)</name>
        <dbReference type="ChEBI" id="CHEBI:29108"/>
        <label>4</label>
    </ligand>
</feature>
<feature type="binding site" evidence="3">
    <location>
        <position position="125"/>
    </location>
    <ligand>
        <name>Ca(2+)</name>
        <dbReference type="ChEBI" id="CHEBI:29108"/>
        <label>4</label>
    </ligand>
</feature>
<feature type="binding site" evidence="3">
    <location>
        <position position="127"/>
    </location>
    <ligand>
        <name>Ca(2+)</name>
        <dbReference type="ChEBI" id="CHEBI:29108"/>
        <label>4</label>
    </ligand>
</feature>
<feature type="binding site" evidence="3">
    <location>
        <position position="129"/>
    </location>
    <ligand>
        <name>Ca(2+)</name>
        <dbReference type="ChEBI" id="CHEBI:29108"/>
        <label>4</label>
    </ligand>
</feature>
<feature type="binding site" evidence="3">
    <location>
        <position position="134"/>
    </location>
    <ligand>
        <name>Ca(2+)</name>
        <dbReference type="ChEBI" id="CHEBI:29108"/>
        <label>4</label>
    </ligand>
</feature>
<evidence type="ECO:0000250" key="1"/>
<evidence type="ECO:0000255" key="2"/>
<evidence type="ECO:0000255" key="3">
    <source>
        <dbReference type="PROSITE-ProRule" id="PRU00448"/>
    </source>
</evidence>
<evidence type="ECO:0000269" key="4">
    <source>
    </source>
</evidence>
<evidence type="ECO:0000305" key="5"/>
<gene>
    <name type="primary">mcfC</name>
    <name type="synonym">CBP11</name>
    <name type="ORF">DDB_G0287009</name>
</gene>
<organism>
    <name type="scientific">Dictyostelium discoideum</name>
    <name type="common">Social amoeba</name>
    <dbReference type="NCBI Taxonomy" id="44689"/>
    <lineage>
        <taxon>Eukaryota</taxon>
        <taxon>Amoebozoa</taxon>
        <taxon>Evosea</taxon>
        <taxon>Eumycetozoa</taxon>
        <taxon>Dictyostelia</taxon>
        <taxon>Dictyosteliales</taxon>
        <taxon>Dictyosteliaceae</taxon>
        <taxon>Dictyostelium</taxon>
    </lineage>
</organism>